<comment type="function">
    <text evidence="1">Binds to DNA and alters its conformation. May be involved in regulation of gene expression, nucleoid organization and DNA protection.</text>
</comment>
<comment type="subunit">
    <text evidence="1">Homodimer.</text>
</comment>
<comment type="subcellular location">
    <subcellularLocation>
        <location evidence="1">Cytoplasm</location>
        <location evidence="1">Nucleoid</location>
    </subcellularLocation>
</comment>
<comment type="similarity">
    <text evidence="1">Belongs to the YbaB/EbfC family.</text>
</comment>
<reference key="1">
    <citation type="submission" date="2008-05" db="EMBL/GenBank/DDBJ databases">
        <title>Complete sequence of Chlorobium limicola DSM 245.</title>
        <authorList>
            <consortium name="US DOE Joint Genome Institute"/>
            <person name="Lucas S."/>
            <person name="Copeland A."/>
            <person name="Lapidus A."/>
            <person name="Glavina del Rio T."/>
            <person name="Dalin E."/>
            <person name="Tice H."/>
            <person name="Bruce D."/>
            <person name="Goodwin L."/>
            <person name="Pitluck S."/>
            <person name="Schmutz J."/>
            <person name="Larimer F."/>
            <person name="Land M."/>
            <person name="Hauser L."/>
            <person name="Kyrpides N."/>
            <person name="Ovchinnikova G."/>
            <person name="Zhao F."/>
            <person name="Li T."/>
            <person name="Liu Z."/>
            <person name="Overmann J."/>
            <person name="Bryant D.A."/>
            <person name="Richardson P."/>
        </authorList>
    </citation>
    <scope>NUCLEOTIDE SEQUENCE [LARGE SCALE GENOMIC DNA]</scope>
    <source>
        <strain>DSM 245 / NBRC 103803 / 6330</strain>
    </source>
</reference>
<proteinExistence type="inferred from homology"/>
<feature type="chain" id="PRO_1000114595" description="Nucleoid-associated protein Clim_0875">
    <location>
        <begin position="1"/>
        <end position="111"/>
    </location>
</feature>
<organism>
    <name type="scientific">Chlorobium limicola (strain DSM 245 / NBRC 103803 / 6330)</name>
    <dbReference type="NCBI Taxonomy" id="290315"/>
    <lineage>
        <taxon>Bacteria</taxon>
        <taxon>Pseudomonadati</taxon>
        <taxon>Chlorobiota</taxon>
        <taxon>Chlorobiia</taxon>
        <taxon>Chlorobiales</taxon>
        <taxon>Chlorobiaceae</taxon>
        <taxon>Chlorobium/Pelodictyon group</taxon>
        <taxon>Chlorobium</taxon>
    </lineage>
</organism>
<keyword id="KW-0963">Cytoplasm</keyword>
<keyword id="KW-0238">DNA-binding</keyword>
<protein>
    <recommendedName>
        <fullName evidence="1">Nucleoid-associated protein Clim_0875</fullName>
    </recommendedName>
</protein>
<dbReference type="EMBL" id="CP001097">
    <property type="protein sequence ID" value="ACD89954.1"/>
    <property type="molecule type" value="Genomic_DNA"/>
</dbReference>
<dbReference type="RefSeq" id="WP_012465833.1">
    <property type="nucleotide sequence ID" value="NC_010803.1"/>
</dbReference>
<dbReference type="SMR" id="B3EIC4"/>
<dbReference type="STRING" id="290315.Clim_0875"/>
<dbReference type="KEGG" id="cli:Clim_0875"/>
<dbReference type="eggNOG" id="COG0718">
    <property type="taxonomic scope" value="Bacteria"/>
</dbReference>
<dbReference type="HOGENOM" id="CLU_140930_0_1_10"/>
<dbReference type="OrthoDB" id="9808738at2"/>
<dbReference type="Proteomes" id="UP000008841">
    <property type="component" value="Chromosome"/>
</dbReference>
<dbReference type="GO" id="GO:0043590">
    <property type="term" value="C:bacterial nucleoid"/>
    <property type="evidence" value="ECO:0007669"/>
    <property type="project" value="UniProtKB-UniRule"/>
</dbReference>
<dbReference type="GO" id="GO:0005829">
    <property type="term" value="C:cytosol"/>
    <property type="evidence" value="ECO:0007669"/>
    <property type="project" value="TreeGrafter"/>
</dbReference>
<dbReference type="GO" id="GO:0003677">
    <property type="term" value="F:DNA binding"/>
    <property type="evidence" value="ECO:0007669"/>
    <property type="project" value="UniProtKB-UniRule"/>
</dbReference>
<dbReference type="Gene3D" id="3.30.1310.10">
    <property type="entry name" value="Nucleoid-associated protein YbaB-like domain"/>
    <property type="match status" value="1"/>
</dbReference>
<dbReference type="HAMAP" id="MF_00274">
    <property type="entry name" value="DNA_YbaB_EbfC"/>
    <property type="match status" value="1"/>
</dbReference>
<dbReference type="InterPro" id="IPR036894">
    <property type="entry name" value="YbaB-like_sf"/>
</dbReference>
<dbReference type="InterPro" id="IPR004401">
    <property type="entry name" value="YbaB/EbfC"/>
</dbReference>
<dbReference type="NCBIfam" id="TIGR00103">
    <property type="entry name" value="DNA_YbaB_EbfC"/>
    <property type="match status" value="1"/>
</dbReference>
<dbReference type="PANTHER" id="PTHR33449">
    <property type="entry name" value="NUCLEOID-ASSOCIATED PROTEIN YBAB"/>
    <property type="match status" value="1"/>
</dbReference>
<dbReference type="PANTHER" id="PTHR33449:SF1">
    <property type="entry name" value="NUCLEOID-ASSOCIATED PROTEIN YBAB"/>
    <property type="match status" value="1"/>
</dbReference>
<dbReference type="Pfam" id="PF02575">
    <property type="entry name" value="YbaB_DNA_bd"/>
    <property type="match status" value="1"/>
</dbReference>
<dbReference type="PIRSF" id="PIRSF004555">
    <property type="entry name" value="UCP004555"/>
    <property type="match status" value="1"/>
</dbReference>
<dbReference type="SUPFAM" id="SSF82607">
    <property type="entry name" value="YbaB-like"/>
    <property type="match status" value="1"/>
</dbReference>
<evidence type="ECO:0000255" key="1">
    <source>
        <dbReference type="HAMAP-Rule" id="MF_00274"/>
    </source>
</evidence>
<gene>
    <name type="ordered locus">Clim_0875</name>
</gene>
<sequence length="111" mass="11749">MGMPNLGDMMKQIQKAGEKMQDVQNQLEKLVAHGESGGGMVKVSVSGKQKLLSLRIDPEIMDDAEMVQDLVIAAVNNALDASAALAQEEISKAAGGMINPADILKNMNLGK</sequence>
<name>Y875_CHLL2</name>
<accession>B3EIC4</accession>